<accession>A7TPS5</accession>
<organism>
    <name type="scientific">Vanderwaltozyma polyspora (strain ATCC 22028 / DSM 70294 / BCRC 21397 / CBS 2163 / NBRC 10782 / NRRL Y-8283 / UCD 57-17)</name>
    <name type="common">Kluyveromyces polysporus</name>
    <dbReference type="NCBI Taxonomy" id="436907"/>
    <lineage>
        <taxon>Eukaryota</taxon>
        <taxon>Fungi</taxon>
        <taxon>Dikarya</taxon>
        <taxon>Ascomycota</taxon>
        <taxon>Saccharomycotina</taxon>
        <taxon>Saccharomycetes</taxon>
        <taxon>Saccharomycetales</taxon>
        <taxon>Saccharomycetaceae</taxon>
        <taxon>Vanderwaltozyma</taxon>
    </lineage>
</organism>
<sequence length="432" mass="49929">MVISKVASKCSPKNVTQSMVLVPSRNIASRKGFVKPIDPKEIIHPFYRPSQIEEFTLCSTERNPSLMDGKPVFPISLPLLSTSVLPQLLYKKIIFPSVRNIVPWLKKFNYIRIKNYSDEYYTIDFKPLEMPTVESKLTITNFPELKILVDLLENTNGGRTDIHNFELCLNNILQKRMSTRLFVEDIYIYLIQNYVTTIPKLILVTKSIKNHLNNGIDHLSILEKLVNEILYLVHSKKFTMDLVLMNTFNGLLKEADNKFNTHSSKFGFSETTKESLLMLYIQAEDIHSSKELLGNLISKKSYPKDEIILAYLDLINKAVYKSNPENAILQRLSYTSNFFNIINHTTNPEILRFFIHNSRHFKEIQCVLDMILKKKNRKDIVLPLCIDLIEKTVSVSDSAVSTSLNLTRLSDYFETMLGMNVRIEAKEVFMKK</sequence>
<feature type="transit peptide" description="Mitochondrion" evidence="2">
    <location>
        <begin position="1"/>
        <end position="34"/>
    </location>
</feature>
<feature type="chain" id="PRO_0000405616" description="ATPase expression protein 1, mitochondrial">
    <location>
        <begin position="35"/>
        <end position="432"/>
    </location>
</feature>
<proteinExistence type="inferred from homology"/>
<comment type="function">
    <text evidence="1">Required for translation of the mitochondrial OLI1 transcript encoding subunit 9 of mitochondrial ATP synthase.</text>
</comment>
<comment type="subcellular location">
    <subcellularLocation>
        <location evidence="1">Mitochondrion</location>
    </subcellularLocation>
</comment>
<comment type="similarity">
    <text evidence="3">Belongs to the AEP1 family.</text>
</comment>
<reference key="1">
    <citation type="journal article" date="2007" name="Proc. Natl. Acad. Sci. U.S.A.">
        <title>Independent sorting-out of thousands of duplicated gene pairs in two yeast species descended from a whole-genome duplication.</title>
        <authorList>
            <person name="Scannell D.R."/>
            <person name="Frank A.C."/>
            <person name="Conant G.C."/>
            <person name="Byrne K.P."/>
            <person name="Woolfit M."/>
            <person name="Wolfe K.H."/>
        </authorList>
    </citation>
    <scope>NUCLEOTIDE SEQUENCE [LARGE SCALE GENOMIC DNA]</scope>
    <source>
        <strain>ATCC 22028 / DSM 70294 / BCRC 21397 / CBS 2163 / NBRC 10782 / NRRL Y-8283 / UCD 57-17</strain>
    </source>
</reference>
<dbReference type="EMBL" id="DS480447">
    <property type="protein sequence ID" value="EDO15726.1"/>
    <property type="molecule type" value="Genomic_DNA"/>
</dbReference>
<dbReference type="RefSeq" id="XP_001643584.1">
    <property type="nucleotide sequence ID" value="XM_001643534.1"/>
</dbReference>
<dbReference type="FunCoup" id="A7TPS5">
    <property type="interactions" value="176"/>
</dbReference>
<dbReference type="GeneID" id="5543840"/>
<dbReference type="KEGG" id="vpo:Kpol_1073p12"/>
<dbReference type="eggNOG" id="ENOG502RXUX">
    <property type="taxonomic scope" value="Eukaryota"/>
</dbReference>
<dbReference type="HOGENOM" id="CLU_035453_0_0_1"/>
<dbReference type="InParanoid" id="A7TPS5"/>
<dbReference type="OMA" id="CKVEANE"/>
<dbReference type="OrthoDB" id="4064791at2759"/>
<dbReference type="PhylomeDB" id="A7TPS5"/>
<dbReference type="Proteomes" id="UP000000267">
    <property type="component" value="Unassembled WGS sequence"/>
</dbReference>
<dbReference type="GO" id="GO:0005739">
    <property type="term" value="C:mitochondrion"/>
    <property type="evidence" value="ECO:0007669"/>
    <property type="project" value="UniProtKB-SubCell"/>
</dbReference>
<dbReference type="GO" id="GO:0045182">
    <property type="term" value="F:translation regulator activity"/>
    <property type="evidence" value="ECO:0007669"/>
    <property type="project" value="InterPro"/>
</dbReference>
<dbReference type="InterPro" id="IPR031467">
    <property type="entry name" value="Aep1"/>
</dbReference>
<dbReference type="Pfam" id="PF17049">
    <property type="entry name" value="AEP1"/>
    <property type="match status" value="1"/>
</dbReference>
<evidence type="ECO:0000250" key="1"/>
<evidence type="ECO:0000255" key="2"/>
<evidence type="ECO:0000305" key="3"/>
<gene>
    <name type="primary">AEP1</name>
    <name type="ORF">Kpol_1073p12</name>
</gene>
<name>AEP1_VANPO</name>
<keyword id="KW-0496">Mitochondrion</keyword>
<keyword id="KW-1185">Reference proteome</keyword>
<keyword id="KW-0809">Transit peptide</keyword>
<keyword id="KW-0810">Translation regulation</keyword>
<protein>
    <recommendedName>
        <fullName>ATPase expression protein 1, mitochondrial</fullName>
    </recommendedName>
</protein>